<organism>
    <name type="scientific">Roseobacter denitrificans (strain ATCC 33942 / OCh 114)</name>
    <name type="common">Erythrobacter sp. (strain OCh 114)</name>
    <name type="synonym">Roseobacter denitrificans</name>
    <dbReference type="NCBI Taxonomy" id="375451"/>
    <lineage>
        <taxon>Bacteria</taxon>
        <taxon>Pseudomonadati</taxon>
        <taxon>Pseudomonadota</taxon>
        <taxon>Alphaproteobacteria</taxon>
        <taxon>Rhodobacterales</taxon>
        <taxon>Roseobacteraceae</taxon>
        <taxon>Roseobacter</taxon>
    </lineage>
</organism>
<proteinExistence type="inferred from homology"/>
<reference key="1">
    <citation type="journal article" date="2007" name="J. Bacteriol.">
        <title>The complete genome sequence of Roseobacter denitrificans reveals a mixotrophic rather than photosynthetic metabolism.</title>
        <authorList>
            <person name="Swingley W.D."/>
            <person name="Sadekar S."/>
            <person name="Mastrian S.D."/>
            <person name="Matthies H.J."/>
            <person name="Hao J."/>
            <person name="Ramos H."/>
            <person name="Acharya C.R."/>
            <person name="Conrad A.L."/>
            <person name="Taylor H.L."/>
            <person name="Dejesa L.C."/>
            <person name="Shah M.K."/>
            <person name="O'Huallachain M.E."/>
            <person name="Lince M.T."/>
            <person name="Blankenship R.E."/>
            <person name="Beatty J.T."/>
            <person name="Touchman J.W."/>
        </authorList>
    </citation>
    <scope>NUCLEOTIDE SEQUENCE [LARGE SCALE GENOMIC DNA]</scope>
    <source>
        <strain>ATCC 33942 / OCh 114</strain>
    </source>
</reference>
<comment type="function">
    <text evidence="1">Catalyzes the reversible formation of acyl-phosphate (acyl-PO(4)) from acyl-[acyl-carrier-protein] (acyl-ACP). This enzyme utilizes acyl-ACP as fatty acyl donor, but not acyl-CoA.</text>
</comment>
<comment type="catalytic activity">
    <reaction evidence="1">
        <text>a fatty acyl-[ACP] + phosphate = an acyl phosphate + holo-[ACP]</text>
        <dbReference type="Rhea" id="RHEA:42292"/>
        <dbReference type="Rhea" id="RHEA-COMP:9685"/>
        <dbReference type="Rhea" id="RHEA-COMP:14125"/>
        <dbReference type="ChEBI" id="CHEBI:43474"/>
        <dbReference type="ChEBI" id="CHEBI:59918"/>
        <dbReference type="ChEBI" id="CHEBI:64479"/>
        <dbReference type="ChEBI" id="CHEBI:138651"/>
        <dbReference type="EC" id="2.3.1.274"/>
    </reaction>
</comment>
<comment type="pathway">
    <text evidence="1">Lipid metabolism; phospholipid metabolism.</text>
</comment>
<comment type="subunit">
    <text evidence="1">Homodimer. Probably interacts with PlsY.</text>
</comment>
<comment type="subcellular location">
    <subcellularLocation>
        <location evidence="1">Cytoplasm</location>
    </subcellularLocation>
    <text evidence="1">Associated with the membrane possibly through PlsY.</text>
</comment>
<comment type="similarity">
    <text evidence="1">Belongs to the PlsX family.</text>
</comment>
<dbReference type="EC" id="2.3.1.274" evidence="1"/>
<dbReference type="EMBL" id="CP000362">
    <property type="protein sequence ID" value="ABG32663.1"/>
    <property type="molecule type" value="Genomic_DNA"/>
</dbReference>
<dbReference type="RefSeq" id="WP_011569279.1">
    <property type="nucleotide sequence ID" value="NC_008209.1"/>
</dbReference>
<dbReference type="SMR" id="Q164D0"/>
<dbReference type="STRING" id="375451.RD1_3155"/>
<dbReference type="KEGG" id="rde:RD1_3155"/>
<dbReference type="eggNOG" id="COG0416">
    <property type="taxonomic scope" value="Bacteria"/>
</dbReference>
<dbReference type="HOGENOM" id="CLU_039379_1_0_5"/>
<dbReference type="OrthoDB" id="9806408at2"/>
<dbReference type="UniPathway" id="UPA00085"/>
<dbReference type="Proteomes" id="UP000007029">
    <property type="component" value="Chromosome"/>
</dbReference>
<dbReference type="GO" id="GO:0005737">
    <property type="term" value="C:cytoplasm"/>
    <property type="evidence" value="ECO:0007669"/>
    <property type="project" value="UniProtKB-SubCell"/>
</dbReference>
<dbReference type="GO" id="GO:0043811">
    <property type="term" value="F:phosphate:acyl-[acyl carrier protein] acyltransferase activity"/>
    <property type="evidence" value="ECO:0007669"/>
    <property type="project" value="UniProtKB-UniRule"/>
</dbReference>
<dbReference type="GO" id="GO:0006633">
    <property type="term" value="P:fatty acid biosynthetic process"/>
    <property type="evidence" value="ECO:0007669"/>
    <property type="project" value="UniProtKB-UniRule"/>
</dbReference>
<dbReference type="GO" id="GO:0008654">
    <property type="term" value="P:phospholipid biosynthetic process"/>
    <property type="evidence" value="ECO:0007669"/>
    <property type="project" value="UniProtKB-KW"/>
</dbReference>
<dbReference type="Gene3D" id="3.40.718.10">
    <property type="entry name" value="Isopropylmalate Dehydrogenase"/>
    <property type="match status" value="1"/>
</dbReference>
<dbReference type="HAMAP" id="MF_00019">
    <property type="entry name" value="PlsX"/>
    <property type="match status" value="1"/>
</dbReference>
<dbReference type="InterPro" id="IPR003664">
    <property type="entry name" value="FA_synthesis"/>
</dbReference>
<dbReference type="InterPro" id="IPR012281">
    <property type="entry name" value="Phospholipid_synth_PlsX-like"/>
</dbReference>
<dbReference type="NCBIfam" id="TIGR00182">
    <property type="entry name" value="plsX"/>
    <property type="match status" value="1"/>
</dbReference>
<dbReference type="PANTHER" id="PTHR30100">
    <property type="entry name" value="FATTY ACID/PHOSPHOLIPID SYNTHESIS PROTEIN PLSX"/>
    <property type="match status" value="1"/>
</dbReference>
<dbReference type="PANTHER" id="PTHR30100:SF1">
    <property type="entry name" value="PHOSPHATE ACYLTRANSFERASE"/>
    <property type="match status" value="1"/>
</dbReference>
<dbReference type="Pfam" id="PF02504">
    <property type="entry name" value="FA_synthesis"/>
    <property type="match status" value="1"/>
</dbReference>
<dbReference type="PIRSF" id="PIRSF002465">
    <property type="entry name" value="Phsphlp_syn_PlsX"/>
    <property type="match status" value="1"/>
</dbReference>
<dbReference type="SUPFAM" id="SSF53659">
    <property type="entry name" value="Isocitrate/Isopropylmalate dehydrogenase-like"/>
    <property type="match status" value="1"/>
</dbReference>
<name>PLSX_ROSDO</name>
<protein>
    <recommendedName>
        <fullName evidence="1">Phosphate acyltransferase</fullName>
        <ecNumber evidence="1">2.3.1.274</ecNumber>
    </recommendedName>
    <alternativeName>
        <fullName evidence="1">Acyl-ACP phosphotransacylase</fullName>
    </alternativeName>
    <alternativeName>
        <fullName evidence="1">Acyl-[acyl-carrier-protein]--phosphate acyltransferase</fullName>
    </alternativeName>
    <alternativeName>
        <fullName evidence="1">Phosphate-acyl-ACP acyltransferase</fullName>
    </alternativeName>
</protein>
<evidence type="ECO:0000255" key="1">
    <source>
        <dbReference type="HAMAP-Rule" id="MF_00019"/>
    </source>
</evidence>
<accession>Q164D0</accession>
<sequence length="357" mass="37890">MTAQTGQTQSQDARIIISVDAMGGDEGPAAVIAGCDVSARKNPDVFFILHGPEAEITALVNRRKSLQGRCEVRDATGVVTMDDKPSQVVRNSKGTSMWSAIEAVRDGSASVAVSCGNTGALMALSMIRLRKLPGVNRPAIAVLYPSSNQQGFNVLLDVGADIKADADDLLRYALMGMSYARNGLDLPRPRVGLLNVGTEEHKGRTELKEAFDLIKEQQEPAGFDFVGFVEGGDISGDLCDVIVTDGFTGNVAIKTGEGTANLVGNRLREAFRYTPLSRLASLLAYPSLRRLKKKIDPRRVNGGVFLGLNGTVVKSHGAADATGVSSAIKLAAQLAHIQFTDKLAARVAGLPAEEKTQ</sequence>
<feature type="chain" id="PRO_1000001818" description="Phosphate acyltransferase">
    <location>
        <begin position="1"/>
        <end position="357"/>
    </location>
</feature>
<keyword id="KW-0963">Cytoplasm</keyword>
<keyword id="KW-0444">Lipid biosynthesis</keyword>
<keyword id="KW-0443">Lipid metabolism</keyword>
<keyword id="KW-0594">Phospholipid biosynthesis</keyword>
<keyword id="KW-1208">Phospholipid metabolism</keyword>
<keyword id="KW-1185">Reference proteome</keyword>
<keyword id="KW-0808">Transferase</keyword>
<gene>
    <name evidence="1" type="primary">plsX</name>
    <name type="ordered locus">RD1_3155</name>
</gene>